<organism>
    <name type="scientific">Acinetobacter baumannii (strain SDF)</name>
    <dbReference type="NCBI Taxonomy" id="509170"/>
    <lineage>
        <taxon>Bacteria</taxon>
        <taxon>Pseudomonadati</taxon>
        <taxon>Pseudomonadota</taxon>
        <taxon>Gammaproteobacteria</taxon>
        <taxon>Moraxellales</taxon>
        <taxon>Moraxellaceae</taxon>
        <taxon>Acinetobacter</taxon>
        <taxon>Acinetobacter calcoaceticus/baumannii complex</taxon>
    </lineage>
</organism>
<accession>B0VQX0</accession>
<evidence type="ECO:0000255" key="1">
    <source>
        <dbReference type="HAMAP-Rule" id="MF_00009"/>
    </source>
</evidence>
<comment type="function">
    <text evidence="1">Single strand-specific metallo-endoribonuclease involved in late-stage 70S ribosome quality control and in maturation of the 3' terminus of the 16S rRNA.</text>
</comment>
<comment type="cofactor">
    <cofactor evidence="1">
        <name>Zn(2+)</name>
        <dbReference type="ChEBI" id="CHEBI:29105"/>
    </cofactor>
    <text evidence="1">Binds 1 zinc ion.</text>
</comment>
<comment type="subcellular location">
    <subcellularLocation>
        <location evidence="1">Cytoplasm</location>
    </subcellularLocation>
</comment>
<comment type="similarity">
    <text evidence="1">Belongs to the endoribonuclease YbeY family.</text>
</comment>
<name>YBEY_ACIBS</name>
<protein>
    <recommendedName>
        <fullName evidence="1">Endoribonuclease YbeY</fullName>
        <ecNumber evidence="1">3.1.-.-</ecNumber>
    </recommendedName>
</protein>
<keyword id="KW-0963">Cytoplasm</keyword>
<keyword id="KW-0255">Endonuclease</keyword>
<keyword id="KW-0378">Hydrolase</keyword>
<keyword id="KW-0479">Metal-binding</keyword>
<keyword id="KW-0540">Nuclease</keyword>
<keyword id="KW-0690">Ribosome biogenesis</keyword>
<keyword id="KW-0698">rRNA processing</keyword>
<keyword id="KW-0862">Zinc</keyword>
<proteinExistence type="inferred from homology"/>
<dbReference type="EC" id="3.1.-.-" evidence="1"/>
<dbReference type="EMBL" id="CU468230">
    <property type="protein sequence ID" value="CAO99866.1"/>
    <property type="molecule type" value="Genomic_DNA"/>
</dbReference>
<dbReference type="SMR" id="B0VQX0"/>
<dbReference type="KEGG" id="abm:ABSDF0477"/>
<dbReference type="HOGENOM" id="CLU_106710_0_1_6"/>
<dbReference type="Proteomes" id="UP000001741">
    <property type="component" value="Chromosome"/>
</dbReference>
<dbReference type="GO" id="GO:0005737">
    <property type="term" value="C:cytoplasm"/>
    <property type="evidence" value="ECO:0007669"/>
    <property type="project" value="UniProtKB-SubCell"/>
</dbReference>
<dbReference type="GO" id="GO:0004222">
    <property type="term" value="F:metalloendopeptidase activity"/>
    <property type="evidence" value="ECO:0007669"/>
    <property type="project" value="InterPro"/>
</dbReference>
<dbReference type="GO" id="GO:0004521">
    <property type="term" value="F:RNA endonuclease activity"/>
    <property type="evidence" value="ECO:0007669"/>
    <property type="project" value="UniProtKB-UniRule"/>
</dbReference>
<dbReference type="GO" id="GO:0008270">
    <property type="term" value="F:zinc ion binding"/>
    <property type="evidence" value="ECO:0007669"/>
    <property type="project" value="UniProtKB-UniRule"/>
</dbReference>
<dbReference type="GO" id="GO:0006364">
    <property type="term" value="P:rRNA processing"/>
    <property type="evidence" value="ECO:0007669"/>
    <property type="project" value="UniProtKB-UniRule"/>
</dbReference>
<dbReference type="Gene3D" id="3.40.390.30">
    <property type="entry name" value="Metalloproteases ('zincins'), catalytic domain"/>
    <property type="match status" value="1"/>
</dbReference>
<dbReference type="HAMAP" id="MF_00009">
    <property type="entry name" value="Endoribonucl_YbeY"/>
    <property type="match status" value="1"/>
</dbReference>
<dbReference type="InterPro" id="IPR023091">
    <property type="entry name" value="MetalPrtase_cat_dom_sf_prd"/>
</dbReference>
<dbReference type="InterPro" id="IPR002036">
    <property type="entry name" value="YbeY"/>
</dbReference>
<dbReference type="InterPro" id="IPR020549">
    <property type="entry name" value="YbeY_CS"/>
</dbReference>
<dbReference type="NCBIfam" id="TIGR00043">
    <property type="entry name" value="rRNA maturation RNase YbeY"/>
    <property type="match status" value="1"/>
</dbReference>
<dbReference type="PANTHER" id="PTHR46986">
    <property type="entry name" value="ENDORIBONUCLEASE YBEY, CHLOROPLASTIC"/>
    <property type="match status" value="1"/>
</dbReference>
<dbReference type="PANTHER" id="PTHR46986:SF1">
    <property type="entry name" value="ENDORIBONUCLEASE YBEY, CHLOROPLASTIC"/>
    <property type="match status" value="1"/>
</dbReference>
<dbReference type="Pfam" id="PF02130">
    <property type="entry name" value="YbeY"/>
    <property type="match status" value="1"/>
</dbReference>
<dbReference type="SUPFAM" id="SSF55486">
    <property type="entry name" value="Metalloproteases ('zincins'), catalytic domain"/>
    <property type="match status" value="1"/>
</dbReference>
<dbReference type="PROSITE" id="PS01306">
    <property type="entry name" value="UPF0054"/>
    <property type="match status" value="1"/>
</dbReference>
<gene>
    <name evidence="1" type="primary">ybeY</name>
    <name type="ordered locus">ABSDF0477</name>
</gene>
<sequence length="158" mass="17922">MKISLSLQQDFQSPELELKRAQLKKIIETTLRHVGYKEDCEIGIACVDLEESHQLNLQYREKDKPTNALSFPSDIPEEVLPMLDALPLGDLVICIPVVLQEALEQKKTAQNHFAHLLVHGVLHLLGYDHETSDEDAEEMEGLEIEILAKLNIANPYQE</sequence>
<feature type="chain" id="PRO_1000089142" description="Endoribonuclease YbeY">
    <location>
        <begin position="1"/>
        <end position="158"/>
    </location>
</feature>
<feature type="binding site" evidence="1">
    <location>
        <position position="119"/>
    </location>
    <ligand>
        <name>Zn(2+)</name>
        <dbReference type="ChEBI" id="CHEBI:29105"/>
        <note>catalytic</note>
    </ligand>
</feature>
<feature type="binding site" evidence="1">
    <location>
        <position position="123"/>
    </location>
    <ligand>
        <name>Zn(2+)</name>
        <dbReference type="ChEBI" id="CHEBI:29105"/>
        <note>catalytic</note>
    </ligand>
</feature>
<feature type="binding site" evidence="1">
    <location>
        <position position="129"/>
    </location>
    <ligand>
        <name>Zn(2+)</name>
        <dbReference type="ChEBI" id="CHEBI:29105"/>
        <note>catalytic</note>
    </ligand>
</feature>
<reference key="1">
    <citation type="journal article" date="2008" name="PLoS ONE">
        <title>Comparative analysis of Acinetobacters: three genomes for three lifestyles.</title>
        <authorList>
            <person name="Vallenet D."/>
            <person name="Nordmann P."/>
            <person name="Barbe V."/>
            <person name="Poirel L."/>
            <person name="Mangenot S."/>
            <person name="Bataille E."/>
            <person name="Dossat C."/>
            <person name="Gas S."/>
            <person name="Kreimeyer A."/>
            <person name="Lenoble P."/>
            <person name="Oztas S."/>
            <person name="Poulain J."/>
            <person name="Segurens B."/>
            <person name="Robert C."/>
            <person name="Abergel C."/>
            <person name="Claverie J.-M."/>
            <person name="Raoult D."/>
            <person name="Medigue C."/>
            <person name="Weissenbach J."/>
            <person name="Cruveiller S."/>
        </authorList>
    </citation>
    <scope>NUCLEOTIDE SEQUENCE [LARGE SCALE GENOMIC DNA]</scope>
    <source>
        <strain>SDF</strain>
    </source>
</reference>